<evidence type="ECO:0000255" key="1">
    <source>
        <dbReference type="HAMAP-Rule" id="MF_00054"/>
    </source>
</evidence>
<proteinExistence type="inferred from homology"/>
<sequence>MANKEYPLAKFRNIGIMAHIDAGKTTATERILFYTGKTHKIGETHEGGATMDWMEQEQERGITITSAATTCFWKDHQVNIIDTPGHVDFTVEVERSLRVLDGAVTILDAKSGVEPQTETVWRQADNYKVPRMVFINKMDKLGADFLMSVGTLRERLHANAVPLQLPIGAEDSFSGIIDLVKNDAVIYKDDLGTVMDETEIPEDMKEIAEEYRTMLLEAVAEVDEDIMMKYLEGEEISVEEIKTALRHGVIANKIVPVLCGSAYKNKGVQLLLDAIVEFMPSPLDIEDVKGTEPTTGEEMTRPADAKAPLAALAFKIATDPFIGKLAFTRIYSGTMKSGTYVFNSNKGKRERIGRLVKMHANHREEVDELKAGELGAIVGLKDTTTGDTLCDDANPIILENMEFPEPVIDVSIEPKTKAGQEKMGIALAKLAEEDPTFRTYTNQETGQTIIAGMGELHLEIIVDRLIREFKVECNVGQPQVAYKETVRKHVKAEGKFVRQSGGRGQYGHCWIEMMPTEGEYEFDNAIVGGAIPKEYIPAIDNGIQEASQSGIIAGYPVINFKVKLVDGSYHDVDSSEMAFKIAGSMAFKNAMSKADAVLLEPSMKVEVVVPEEYMGDVIGDINSRRGRIEGMTPRAGAEVIRAFVPLSEMFGYATTLRSKTQGRGNYVMQFDHYEEVPKSIQDKVIGERK</sequence>
<accession>C1FMV4</accession>
<reference key="1">
    <citation type="submission" date="2008-10" db="EMBL/GenBank/DDBJ databases">
        <title>Genome sequence of Clostridium botulinum A2 Kyoto.</title>
        <authorList>
            <person name="Shrivastava S."/>
            <person name="Brinkac L.M."/>
            <person name="Brown J.L."/>
            <person name="Bruce D."/>
            <person name="Detter C.C."/>
            <person name="Johnson E.A."/>
            <person name="Munk C.A."/>
            <person name="Smith L.A."/>
            <person name="Smith T.J."/>
            <person name="Sutton G."/>
            <person name="Brettin T.S."/>
        </authorList>
    </citation>
    <scope>NUCLEOTIDE SEQUENCE [LARGE SCALE GENOMIC DNA]</scope>
    <source>
        <strain>Kyoto / Type A2</strain>
    </source>
</reference>
<name>EFG_CLOBJ</name>
<organism>
    <name type="scientific">Clostridium botulinum (strain Kyoto / Type A2)</name>
    <dbReference type="NCBI Taxonomy" id="536232"/>
    <lineage>
        <taxon>Bacteria</taxon>
        <taxon>Bacillati</taxon>
        <taxon>Bacillota</taxon>
        <taxon>Clostridia</taxon>
        <taxon>Eubacteriales</taxon>
        <taxon>Clostridiaceae</taxon>
        <taxon>Clostridium</taxon>
    </lineage>
</organism>
<gene>
    <name evidence="1" type="primary">fusA</name>
    <name type="ordered locus">CLM_3951</name>
</gene>
<feature type="chain" id="PRO_1000201449" description="Elongation factor G">
    <location>
        <begin position="1"/>
        <end position="689"/>
    </location>
</feature>
<feature type="domain" description="tr-type G">
    <location>
        <begin position="9"/>
        <end position="283"/>
    </location>
</feature>
<feature type="binding site" evidence="1">
    <location>
        <begin position="18"/>
        <end position="25"/>
    </location>
    <ligand>
        <name>GTP</name>
        <dbReference type="ChEBI" id="CHEBI:37565"/>
    </ligand>
</feature>
<feature type="binding site" evidence="1">
    <location>
        <begin position="82"/>
        <end position="86"/>
    </location>
    <ligand>
        <name>GTP</name>
        <dbReference type="ChEBI" id="CHEBI:37565"/>
    </ligand>
</feature>
<feature type="binding site" evidence="1">
    <location>
        <begin position="136"/>
        <end position="139"/>
    </location>
    <ligand>
        <name>GTP</name>
        <dbReference type="ChEBI" id="CHEBI:37565"/>
    </ligand>
</feature>
<protein>
    <recommendedName>
        <fullName evidence="1">Elongation factor G</fullName>
        <shortName evidence="1">EF-G</shortName>
    </recommendedName>
</protein>
<dbReference type="EMBL" id="CP001581">
    <property type="protein sequence ID" value="ACO85909.1"/>
    <property type="molecule type" value="Genomic_DNA"/>
</dbReference>
<dbReference type="RefSeq" id="WP_012344990.1">
    <property type="nucleotide sequence ID" value="NC_012563.1"/>
</dbReference>
<dbReference type="SMR" id="C1FMV4"/>
<dbReference type="KEGG" id="cby:CLM_3951"/>
<dbReference type="eggNOG" id="COG0480">
    <property type="taxonomic scope" value="Bacteria"/>
</dbReference>
<dbReference type="HOGENOM" id="CLU_002794_4_1_9"/>
<dbReference type="Proteomes" id="UP000001374">
    <property type="component" value="Chromosome"/>
</dbReference>
<dbReference type="GO" id="GO:0005737">
    <property type="term" value="C:cytoplasm"/>
    <property type="evidence" value="ECO:0007669"/>
    <property type="project" value="UniProtKB-SubCell"/>
</dbReference>
<dbReference type="GO" id="GO:0005525">
    <property type="term" value="F:GTP binding"/>
    <property type="evidence" value="ECO:0007669"/>
    <property type="project" value="UniProtKB-UniRule"/>
</dbReference>
<dbReference type="GO" id="GO:0003924">
    <property type="term" value="F:GTPase activity"/>
    <property type="evidence" value="ECO:0007669"/>
    <property type="project" value="InterPro"/>
</dbReference>
<dbReference type="GO" id="GO:0003746">
    <property type="term" value="F:translation elongation factor activity"/>
    <property type="evidence" value="ECO:0007669"/>
    <property type="project" value="UniProtKB-UniRule"/>
</dbReference>
<dbReference type="GO" id="GO:0032790">
    <property type="term" value="P:ribosome disassembly"/>
    <property type="evidence" value="ECO:0007669"/>
    <property type="project" value="TreeGrafter"/>
</dbReference>
<dbReference type="CDD" id="cd01886">
    <property type="entry name" value="EF-G"/>
    <property type="match status" value="1"/>
</dbReference>
<dbReference type="CDD" id="cd16262">
    <property type="entry name" value="EFG_III"/>
    <property type="match status" value="1"/>
</dbReference>
<dbReference type="CDD" id="cd01434">
    <property type="entry name" value="EFG_mtEFG1_IV"/>
    <property type="match status" value="1"/>
</dbReference>
<dbReference type="CDD" id="cd03713">
    <property type="entry name" value="EFG_mtEFG_C"/>
    <property type="match status" value="1"/>
</dbReference>
<dbReference type="CDD" id="cd04088">
    <property type="entry name" value="EFG_mtEFG_II"/>
    <property type="match status" value="1"/>
</dbReference>
<dbReference type="FunFam" id="2.40.30.10:FF:000006">
    <property type="entry name" value="Elongation factor G"/>
    <property type="match status" value="1"/>
</dbReference>
<dbReference type="FunFam" id="3.30.230.10:FF:000003">
    <property type="entry name" value="Elongation factor G"/>
    <property type="match status" value="1"/>
</dbReference>
<dbReference type="FunFam" id="3.30.70.240:FF:000001">
    <property type="entry name" value="Elongation factor G"/>
    <property type="match status" value="1"/>
</dbReference>
<dbReference type="FunFam" id="3.30.70.870:FF:000001">
    <property type="entry name" value="Elongation factor G"/>
    <property type="match status" value="1"/>
</dbReference>
<dbReference type="FunFam" id="3.40.50.300:FF:000029">
    <property type="entry name" value="Elongation factor G"/>
    <property type="match status" value="1"/>
</dbReference>
<dbReference type="Gene3D" id="3.30.230.10">
    <property type="match status" value="1"/>
</dbReference>
<dbReference type="Gene3D" id="3.30.70.240">
    <property type="match status" value="1"/>
</dbReference>
<dbReference type="Gene3D" id="3.30.70.870">
    <property type="entry name" value="Elongation Factor G (Translational Gtpase), domain 3"/>
    <property type="match status" value="1"/>
</dbReference>
<dbReference type="Gene3D" id="3.40.50.300">
    <property type="entry name" value="P-loop containing nucleotide triphosphate hydrolases"/>
    <property type="match status" value="1"/>
</dbReference>
<dbReference type="Gene3D" id="2.40.30.10">
    <property type="entry name" value="Translation factors"/>
    <property type="match status" value="1"/>
</dbReference>
<dbReference type="HAMAP" id="MF_00054_B">
    <property type="entry name" value="EF_G_EF_2_B"/>
    <property type="match status" value="1"/>
</dbReference>
<dbReference type="InterPro" id="IPR053905">
    <property type="entry name" value="EF-G-like_DII"/>
</dbReference>
<dbReference type="InterPro" id="IPR041095">
    <property type="entry name" value="EFG_II"/>
</dbReference>
<dbReference type="InterPro" id="IPR009022">
    <property type="entry name" value="EFG_III"/>
</dbReference>
<dbReference type="InterPro" id="IPR035647">
    <property type="entry name" value="EFG_III/V"/>
</dbReference>
<dbReference type="InterPro" id="IPR047872">
    <property type="entry name" value="EFG_IV"/>
</dbReference>
<dbReference type="InterPro" id="IPR035649">
    <property type="entry name" value="EFG_V"/>
</dbReference>
<dbReference type="InterPro" id="IPR000640">
    <property type="entry name" value="EFG_V-like"/>
</dbReference>
<dbReference type="InterPro" id="IPR031157">
    <property type="entry name" value="G_TR_CS"/>
</dbReference>
<dbReference type="InterPro" id="IPR027417">
    <property type="entry name" value="P-loop_NTPase"/>
</dbReference>
<dbReference type="InterPro" id="IPR020568">
    <property type="entry name" value="Ribosomal_Su5_D2-typ_SF"/>
</dbReference>
<dbReference type="InterPro" id="IPR014721">
    <property type="entry name" value="Ribsml_uS5_D2-typ_fold_subgr"/>
</dbReference>
<dbReference type="InterPro" id="IPR005225">
    <property type="entry name" value="Small_GTP-bd"/>
</dbReference>
<dbReference type="InterPro" id="IPR000795">
    <property type="entry name" value="T_Tr_GTP-bd_dom"/>
</dbReference>
<dbReference type="InterPro" id="IPR009000">
    <property type="entry name" value="Transl_B-barrel_sf"/>
</dbReference>
<dbReference type="InterPro" id="IPR004540">
    <property type="entry name" value="Transl_elong_EFG/EF2"/>
</dbReference>
<dbReference type="InterPro" id="IPR005517">
    <property type="entry name" value="Transl_elong_EFG/EF2_IV"/>
</dbReference>
<dbReference type="NCBIfam" id="TIGR00484">
    <property type="entry name" value="EF-G"/>
    <property type="match status" value="1"/>
</dbReference>
<dbReference type="NCBIfam" id="NF009379">
    <property type="entry name" value="PRK12740.1-3"/>
    <property type="match status" value="1"/>
</dbReference>
<dbReference type="NCBIfam" id="NF009381">
    <property type="entry name" value="PRK12740.1-5"/>
    <property type="match status" value="1"/>
</dbReference>
<dbReference type="NCBIfam" id="TIGR00231">
    <property type="entry name" value="small_GTP"/>
    <property type="match status" value="1"/>
</dbReference>
<dbReference type="PANTHER" id="PTHR43261:SF1">
    <property type="entry name" value="RIBOSOME-RELEASING FACTOR 2, MITOCHONDRIAL"/>
    <property type="match status" value="1"/>
</dbReference>
<dbReference type="PANTHER" id="PTHR43261">
    <property type="entry name" value="TRANSLATION ELONGATION FACTOR G-RELATED"/>
    <property type="match status" value="1"/>
</dbReference>
<dbReference type="Pfam" id="PF22042">
    <property type="entry name" value="EF-G_D2"/>
    <property type="match status" value="1"/>
</dbReference>
<dbReference type="Pfam" id="PF00679">
    <property type="entry name" value="EFG_C"/>
    <property type="match status" value="1"/>
</dbReference>
<dbReference type="Pfam" id="PF14492">
    <property type="entry name" value="EFG_III"/>
    <property type="match status" value="1"/>
</dbReference>
<dbReference type="Pfam" id="PF03764">
    <property type="entry name" value="EFG_IV"/>
    <property type="match status" value="1"/>
</dbReference>
<dbReference type="Pfam" id="PF00009">
    <property type="entry name" value="GTP_EFTU"/>
    <property type="match status" value="1"/>
</dbReference>
<dbReference type="PRINTS" id="PR00315">
    <property type="entry name" value="ELONGATNFCT"/>
</dbReference>
<dbReference type="SMART" id="SM00838">
    <property type="entry name" value="EFG_C"/>
    <property type="match status" value="1"/>
</dbReference>
<dbReference type="SMART" id="SM00889">
    <property type="entry name" value="EFG_IV"/>
    <property type="match status" value="1"/>
</dbReference>
<dbReference type="SUPFAM" id="SSF54980">
    <property type="entry name" value="EF-G C-terminal domain-like"/>
    <property type="match status" value="2"/>
</dbReference>
<dbReference type="SUPFAM" id="SSF52540">
    <property type="entry name" value="P-loop containing nucleoside triphosphate hydrolases"/>
    <property type="match status" value="1"/>
</dbReference>
<dbReference type="SUPFAM" id="SSF54211">
    <property type="entry name" value="Ribosomal protein S5 domain 2-like"/>
    <property type="match status" value="1"/>
</dbReference>
<dbReference type="SUPFAM" id="SSF50447">
    <property type="entry name" value="Translation proteins"/>
    <property type="match status" value="1"/>
</dbReference>
<dbReference type="PROSITE" id="PS00301">
    <property type="entry name" value="G_TR_1"/>
    <property type="match status" value="1"/>
</dbReference>
<dbReference type="PROSITE" id="PS51722">
    <property type="entry name" value="G_TR_2"/>
    <property type="match status" value="1"/>
</dbReference>
<comment type="function">
    <text evidence="1">Catalyzes the GTP-dependent ribosomal translocation step during translation elongation. During this step, the ribosome changes from the pre-translocational (PRE) to the post-translocational (POST) state as the newly formed A-site-bound peptidyl-tRNA and P-site-bound deacylated tRNA move to the P and E sites, respectively. Catalyzes the coordinated movement of the two tRNA molecules, the mRNA and conformational changes in the ribosome.</text>
</comment>
<comment type="subcellular location">
    <subcellularLocation>
        <location evidence="1">Cytoplasm</location>
    </subcellularLocation>
</comment>
<comment type="similarity">
    <text evidence="1">Belongs to the TRAFAC class translation factor GTPase superfamily. Classic translation factor GTPase family. EF-G/EF-2 subfamily.</text>
</comment>
<keyword id="KW-0963">Cytoplasm</keyword>
<keyword id="KW-0251">Elongation factor</keyword>
<keyword id="KW-0342">GTP-binding</keyword>
<keyword id="KW-0547">Nucleotide-binding</keyword>
<keyword id="KW-0648">Protein biosynthesis</keyword>